<proteinExistence type="evidence at protein level"/>
<gene>
    <name evidence="3" type="primary">AT1</name>
</gene>
<protein>
    <recommendedName>
        <fullName evidence="3">Alcohol acyltransferase 1</fullName>
        <shortName evidence="3">AdAT1</shortName>
        <ecNumber evidence="2">2.3.1.-</ecNumber>
    </recommendedName>
</protein>
<feature type="chain" id="PRO_0000451700" description="Alcohol acyltransferase 1">
    <location>
        <begin position="1"/>
        <end position="456"/>
    </location>
</feature>
<feature type="active site" description="Proton acceptor" evidence="1">
    <location>
        <position position="166"/>
    </location>
</feature>
<feature type="active site" description="Proton acceptor" evidence="1">
    <location>
        <position position="382"/>
    </location>
</feature>
<keyword id="KW-0012">Acyltransferase</keyword>
<keyword id="KW-0808">Transferase</keyword>
<organism>
    <name type="scientific">Actinidia deliciosa</name>
    <name type="common">Kiwi</name>
    <dbReference type="NCBI Taxonomy" id="3627"/>
    <lineage>
        <taxon>Eukaryota</taxon>
        <taxon>Viridiplantae</taxon>
        <taxon>Streptophyta</taxon>
        <taxon>Embryophyta</taxon>
        <taxon>Tracheophyta</taxon>
        <taxon>Spermatophyta</taxon>
        <taxon>Magnoliopsida</taxon>
        <taxon>eudicotyledons</taxon>
        <taxon>Gunneridae</taxon>
        <taxon>Pentapetalae</taxon>
        <taxon>asterids</taxon>
        <taxon>Ericales</taxon>
        <taxon>Actinidiaceae</taxon>
        <taxon>Actinidia</taxon>
    </lineage>
</organism>
<name>AT1_ACTDE</name>
<evidence type="ECO:0000250" key="1">
    <source>
        <dbReference type="UniProtKB" id="Q9FI78"/>
    </source>
</evidence>
<evidence type="ECO:0000269" key="2">
    <source>
    </source>
</evidence>
<evidence type="ECO:0000303" key="3">
    <source>
    </source>
</evidence>
<evidence type="ECO:0000305" key="4"/>
<sequence>MASFPPSLVFTVRRKEPILVLPSKPTPRELKQLSDIDDQEGLRFQVPVIMFYKRKLSTEGEDPVKVIREALAEALAFYYPFAGRLIEGPNRKLMVDCTSEGVLFIEADADIELNQLIGDTIDPGTYLDELLHDVPGSEGILGCPLLLIQVTRFRCGGWAFAIRLNHTMSDTLGLVQFLTTIAEFTRGAEGAPSVPPVWQREFLAARQPPFIPFQHHEYEQVIDTTPDDNKKSMTHKSFFFGPKEIRAIRSHLPLHHRSTSSTFDVLTACLWRCRTCALVLDPKKTVRISCAASGRGKHDLHVPRGYYGNVSAFPATVLRAGMISTSPLEYAMEGVKKAKARMTGEYLRSVADLMVTKGRPLYTVVGNYIVSDMTRVGLDTIDFGWGKPVYGGPARAFPLISFYGRFKDNKGEDGIVVLICLPEAAMKRFQEELKKMTGEHVDGPFDYKPIKVVSKL</sequence>
<dbReference type="EC" id="2.3.1.-" evidence="2"/>
<dbReference type="EMBL" id="KJ626345">
    <property type="protein sequence ID" value="AIC83790.1"/>
    <property type="molecule type" value="mRNA"/>
</dbReference>
<dbReference type="EMBL" id="HO772637">
    <property type="status" value="NOT_ANNOTATED_CDS"/>
    <property type="molecule type" value="mRNA"/>
</dbReference>
<dbReference type="SMR" id="A0A068BGA5"/>
<dbReference type="BioCyc" id="MetaCyc:MONOMER-16563"/>
<dbReference type="GO" id="GO:0016746">
    <property type="term" value="F:acyltransferase activity"/>
    <property type="evidence" value="ECO:0000314"/>
    <property type="project" value="UniProtKB"/>
</dbReference>
<dbReference type="GO" id="GO:0006066">
    <property type="term" value="P:alcohol metabolic process"/>
    <property type="evidence" value="ECO:0000314"/>
    <property type="project" value="UniProtKB"/>
</dbReference>
<dbReference type="GO" id="GO:0009836">
    <property type="term" value="P:fruit ripening, climacteric"/>
    <property type="evidence" value="ECO:0000270"/>
    <property type="project" value="UniProtKB"/>
</dbReference>
<dbReference type="GO" id="GO:0009723">
    <property type="term" value="P:response to ethylene"/>
    <property type="evidence" value="ECO:0000270"/>
    <property type="project" value="UniProtKB"/>
</dbReference>
<dbReference type="Gene3D" id="3.30.559.10">
    <property type="entry name" value="Chloramphenicol acetyltransferase-like domain"/>
    <property type="match status" value="2"/>
</dbReference>
<dbReference type="InterPro" id="IPR023213">
    <property type="entry name" value="CAT-like_dom_sf"/>
</dbReference>
<dbReference type="InterPro" id="IPR050898">
    <property type="entry name" value="Plant_acyltransferase"/>
</dbReference>
<dbReference type="PANTHER" id="PTHR31147">
    <property type="entry name" value="ACYL TRANSFERASE 4"/>
    <property type="match status" value="1"/>
</dbReference>
<dbReference type="PANTHER" id="PTHR31147:SF66">
    <property type="entry name" value="OS05G0315700 PROTEIN"/>
    <property type="match status" value="1"/>
</dbReference>
<dbReference type="Pfam" id="PF02458">
    <property type="entry name" value="Transferase"/>
    <property type="match status" value="1"/>
</dbReference>
<accession>A0A068BGA5</accession>
<reference key="1">
    <citation type="journal article" date="2014" name="Plant J.">
        <title>The AAT1 locus is critical for the biosynthesis of esters contributing to 'ripe apple' flavour in 'Royal Gala' and 'Granny Smith' apples.</title>
        <authorList>
            <person name="Souleyre E.J.F."/>
            <person name="Chagne D."/>
            <person name="Chen X."/>
            <person name="Tomes S."/>
            <person name="Turner R.M."/>
            <person name="Wang M.Y."/>
            <person name="Maddumage R."/>
            <person name="Hunt M.B."/>
            <person name="Winz R.A."/>
            <person name="Wiedow C."/>
            <person name="Hamiaux C."/>
            <person name="Gardiner S.E."/>
            <person name="Rowan D.D."/>
            <person name="Atkinson R.G."/>
        </authorList>
    </citation>
    <scope>NUCLEOTIDE SEQUENCE [MRNA]</scope>
</reference>
<reference key="2">
    <citation type="submission" date="2010-10" db="EMBL/GenBank/DDBJ databases">
        <title>Plant and food research apple EST project.</title>
        <authorList>
            <person name="Beuning L."/>
            <person name="Bowen J."/>
            <person name="Crowhurst R."/>
            <person name="Gleave A."/>
            <person name="Janssen B."/>
            <person name="McArtney S."/>
            <person name="Newcomb R."/>
            <person name="Ross G."/>
            <person name="Snowden K."/>
            <person name="Walton E."/>
            <person name="Yauk Y."/>
        </authorList>
    </citation>
    <scope>NUCLEOTIDE SEQUENCE [MRNA]</scope>
    <source>
        <tissue>Petal</tissue>
    </source>
</reference>
<reference key="3">
    <citation type="journal article" date="2011" name="Phytochemistry">
        <title>Characterisation of two alcohol acyltransferases from kiwifruit (Actinidia spp.) reveals distinct substrate preferences.</title>
        <authorList>
            <person name="Guenther C.S."/>
            <person name="Chervin C."/>
            <person name="Marsh K.B."/>
            <person name="Newcomb R.D."/>
            <person name="Souleyre E.J.F."/>
        </authorList>
    </citation>
    <scope>FUNCTION</scope>
    <scope>CATALYTIC ACTIVITY</scope>
    <scope>TISSUE SPECIFICITY</scope>
    <scope>DEVELOPMENTAL STAGE</scope>
    <scope>INDUCTION BY ETHYLENE</scope>
    <scope>GENE FAMILY</scope>
    <scope>NOMENCLATURE</scope>
</reference>
<comment type="function">
    <text evidence="2">Involved in the biosynthesis of volatile esters which confer kiwifruit flavor (PubMed:21450321). Alcohol acyl transferase that can use a wide range of alcohols as substrate to produce esters (PubMed:21450321). Exhibits benzoyl-CoA:alcohol O-acyltransferase activity (PubMed:21450321).</text>
</comment>
<comment type="catalytic activity">
    <reaction evidence="2">
        <text>3-(methylsulfanyl)propanoyl-CoA + butan-1-ol = butyl 3-(methylsulfanyl)propanoate + CoA</text>
        <dbReference type="Rhea" id="RHEA:64676"/>
        <dbReference type="ChEBI" id="CHEBI:28885"/>
        <dbReference type="ChEBI" id="CHEBI:57287"/>
        <dbReference type="ChEBI" id="CHEBI:82815"/>
        <dbReference type="ChEBI" id="CHEBI:156073"/>
    </reaction>
    <physiologicalReaction direction="left-to-right" evidence="2">
        <dbReference type="Rhea" id="RHEA:64677"/>
    </physiologicalReaction>
</comment>
<comment type="catalytic activity">
    <reaction evidence="2">
        <text>ethanol + benzoyl-CoA = ethyl benzoate + CoA</text>
        <dbReference type="Rhea" id="RHEA:64680"/>
        <dbReference type="ChEBI" id="CHEBI:16236"/>
        <dbReference type="ChEBI" id="CHEBI:57287"/>
        <dbReference type="ChEBI" id="CHEBI:57369"/>
        <dbReference type="ChEBI" id="CHEBI:156074"/>
    </reaction>
    <physiologicalReaction direction="left-to-right" evidence="2">
        <dbReference type="Rhea" id="RHEA:64681"/>
    </physiologicalReaction>
</comment>
<comment type="catalytic activity">
    <reaction evidence="2">
        <text>butan-1-ol + benzoyl-CoA = butyl benzoate + CoA</text>
        <dbReference type="Rhea" id="RHEA:64636"/>
        <dbReference type="ChEBI" id="CHEBI:28885"/>
        <dbReference type="ChEBI" id="CHEBI:57287"/>
        <dbReference type="ChEBI" id="CHEBI:57369"/>
        <dbReference type="ChEBI" id="CHEBI:156070"/>
    </reaction>
    <physiologicalReaction direction="left-to-right" evidence="2">
        <dbReference type="Rhea" id="RHEA:64637"/>
    </physiologicalReaction>
</comment>
<comment type="catalytic activity">
    <reaction evidence="2">
        <text>2-(methylsulfanyl)acetyl-CoA + butan-1-ol = butyl 2-(methylsulfanyl)acetate + CoA</text>
        <dbReference type="Rhea" id="RHEA:64672"/>
        <dbReference type="ChEBI" id="CHEBI:28885"/>
        <dbReference type="ChEBI" id="CHEBI:57287"/>
        <dbReference type="ChEBI" id="CHEBI:156076"/>
        <dbReference type="ChEBI" id="CHEBI:156077"/>
    </reaction>
    <physiologicalReaction direction="left-to-right" evidence="2">
        <dbReference type="Rhea" id="RHEA:64673"/>
    </physiologicalReaction>
</comment>
<comment type="tissue specificity">
    <text evidence="2">Expressed in fruit.</text>
</comment>
<comment type="developmental stage">
    <text evidence="2">Accumulates in kiwifruit during ripening.</text>
</comment>
<comment type="induction">
    <text evidence="2">Induced by ethylene in ripe fruits.</text>
</comment>
<comment type="similarity">
    <text evidence="4">Belongs to the plant acyltransferase family.</text>
</comment>